<evidence type="ECO:0000250" key="1"/>
<evidence type="ECO:0000269" key="2">
    <source>
    </source>
</evidence>
<evidence type="ECO:0000269" key="3">
    <source>
    </source>
</evidence>
<evidence type="ECO:0000269" key="4">
    <source>
    </source>
</evidence>
<evidence type="ECO:0000269" key="5">
    <source>
    </source>
</evidence>
<evidence type="ECO:0000305" key="6"/>
<evidence type="ECO:0000305" key="7">
    <source>
    </source>
</evidence>
<gene>
    <name type="primary">fpaB-1</name>
    <name type="synonym">fp21B</name>
    <name type="synonym">fpa1B</name>
    <name type="synonym">fpa2</name>
    <name type="synonym">skp1B</name>
    <name type="ORF">DDB_G0273251</name>
</gene>
<gene>
    <name type="primary">fpaB-2</name>
    <name type="synonym">fp21B</name>
    <name type="synonym">fpa1B</name>
    <name type="synonym">fpa2</name>
    <name type="synonym">skp1B</name>
    <name type="ORF">DDB_G0273615</name>
</gene>
<accession>Q557E4</accession>
<name>SKP1B_DICDI</name>
<comment type="subunit">
    <text>Multiprotein complex (SCF) with cullin and F-box-containing protein. Capable of undergoing aggregation.</text>
</comment>
<comment type="subcellular location">
    <subcellularLocation>
        <location>Cytoplasm</location>
    </subcellularLocation>
    <subcellularLocation>
        <location>Nucleus</location>
    </subcellularLocation>
</comment>
<comment type="developmental stage">
    <text evidence="2">Expressed throughout the life cycle.</text>
</comment>
<comment type="PTM">
    <text>O-linked glycan consists of linear Gal-Gal-Fuc-Gal-GlcNAc.</text>
</comment>
<comment type="PTM">
    <text>Not glycosylated in prespore cells.</text>
</comment>
<comment type="PTM">
    <text>FpaA and fpaB seem to be identically glycosylated. Glycosylation is required for nuclear enrichment.</text>
</comment>
<comment type="PTM">
    <text evidence="3 5">Hydroxylated by phyA.</text>
</comment>
<comment type="mass spectrometry">
    <molecule>SCF ubiquitin ligase complex protein SKP1b</molecule>
    <text>The mass corresponds to the peptide with Ser-2 acetylated, Pro-143 hydroxylated and modified by a GlcNAc residue.</text>
</comment>
<comment type="miscellaneous">
    <text>There are two genes coding for Skp1, they only differ in a single position in the coding region.</text>
</comment>
<comment type="similarity">
    <text evidence="6">Belongs to the SKP1 family.</text>
</comment>
<comment type="caution">
    <text evidence="6">The gene for this protein is duplicated in strains AX3 and AX4. These strains contain a duplication of a segment of 750 kb of chromosome 2 compared to the corresponding sequence in strain AX2.</text>
</comment>
<keyword id="KW-0007">Acetylation</keyword>
<keyword id="KW-0963">Cytoplasm</keyword>
<keyword id="KW-0903">Direct protein sequencing</keyword>
<keyword id="KW-0325">Glycoprotein</keyword>
<keyword id="KW-0379">Hydroxylation</keyword>
<keyword id="KW-0539">Nucleus</keyword>
<keyword id="KW-1185">Reference proteome</keyword>
<keyword id="KW-0833">Ubl conjugation pathway</keyword>
<dbReference type="EMBL" id="U73686">
    <property type="protein sequence ID" value="AAB88390.1"/>
    <property type="molecule type" value="Genomic_DNA"/>
</dbReference>
<dbReference type="EMBL" id="AAFI02000011">
    <property type="protein sequence ID" value="EAL70498.1"/>
    <property type="molecule type" value="Genomic_DNA"/>
</dbReference>
<dbReference type="EMBL" id="AAFI02000009">
    <property type="protein sequence ID" value="EAL70843.1"/>
    <property type="molecule type" value="Genomic_DNA"/>
</dbReference>
<dbReference type="PIR" id="A55969">
    <property type="entry name" value="A55969"/>
</dbReference>
<dbReference type="RefSeq" id="XP_644424.1">
    <property type="nucleotide sequence ID" value="XM_639332.1"/>
</dbReference>
<dbReference type="RefSeq" id="XP_644826.1">
    <property type="nucleotide sequence ID" value="XM_639734.1"/>
</dbReference>
<dbReference type="SMR" id="Q557E4"/>
<dbReference type="FunCoup" id="Q557E4">
    <property type="interactions" value="903"/>
</dbReference>
<dbReference type="STRING" id="44689.Q557E4"/>
<dbReference type="GlyCosmos" id="Q557E4">
    <property type="glycosylation" value="1 site, No reported glycans"/>
</dbReference>
<dbReference type="iPTMnet" id="Q557E4"/>
<dbReference type="PaxDb" id="44689-DDB0185043"/>
<dbReference type="EnsemblProtists" id="EAL70498">
    <property type="protein sequence ID" value="EAL70498"/>
    <property type="gene ID" value="DDB_G0273615"/>
</dbReference>
<dbReference type="EnsemblProtists" id="EAL70843">
    <property type="protein sequence ID" value="EAL70843"/>
    <property type="gene ID" value="DDB_G0273251"/>
</dbReference>
<dbReference type="GeneID" id="8618928"/>
<dbReference type="GeneID" id="8619049"/>
<dbReference type="KEGG" id="ddi:DDB_G0273251"/>
<dbReference type="KEGG" id="ddi:DDB_G0273615"/>
<dbReference type="dictyBase" id="DDB_G0273251">
    <property type="gene designation" value="fpaB-1"/>
</dbReference>
<dbReference type="dictyBase" id="DDB_G0273615">
    <property type="gene designation" value="fpaB-2"/>
</dbReference>
<dbReference type="VEuPathDB" id="AmoebaDB:DDB_G0273615"/>
<dbReference type="eggNOG" id="KOG1724">
    <property type="taxonomic scope" value="Eukaryota"/>
</dbReference>
<dbReference type="HOGENOM" id="CLU_059252_6_1_1"/>
<dbReference type="InParanoid" id="Q557E4"/>
<dbReference type="OMA" id="LHIEYSC"/>
<dbReference type="PhylomeDB" id="Q557E4"/>
<dbReference type="Reactome" id="R-DDI-68949">
    <property type="pathway name" value="Orc1 removal from chromatin"/>
</dbReference>
<dbReference type="Reactome" id="R-DDI-69231">
    <property type="pathway name" value="Cyclin D associated events in G1"/>
</dbReference>
<dbReference type="Reactome" id="R-DDI-8854050">
    <property type="pathway name" value="FBXL7 down-regulates AURKA during mitotic entry and in early mitosis"/>
</dbReference>
<dbReference type="Reactome" id="R-DDI-8951664">
    <property type="pathway name" value="Neddylation"/>
</dbReference>
<dbReference type="Reactome" id="R-DDI-917937">
    <property type="pathway name" value="Iron uptake and transport"/>
</dbReference>
<dbReference type="Reactome" id="R-DDI-983168">
    <property type="pathway name" value="Antigen processing: Ubiquitination &amp; Proteasome degradation"/>
</dbReference>
<dbReference type="PRO" id="PR:Q557E4"/>
<dbReference type="Proteomes" id="UP000002195">
    <property type="component" value="Chromosome 2"/>
</dbReference>
<dbReference type="GO" id="GO:0005938">
    <property type="term" value="C:cell cortex"/>
    <property type="evidence" value="ECO:0000314"/>
    <property type="project" value="dictyBase"/>
</dbReference>
<dbReference type="GO" id="GO:0005737">
    <property type="term" value="C:cytoplasm"/>
    <property type="evidence" value="ECO:0000314"/>
    <property type="project" value="dictyBase"/>
</dbReference>
<dbReference type="GO" id="GO:0043223">
    <property type="term" value="C:cytoplasmic SCF ubiquitin ligase complex"/>
    <property type="evidence" value="ECO:0000314"/>
    <property type="project" value="dictyBase"/>
</dbReference>
<dbReference type="GO" id="GO:0005634">
    <property type="term" value="C:nucleus"/>
    <property type="evidence" value="ECO:0000314"/>
    <property type="project" value="dictyBase"/>
</dbReference>
<dbReference type="GO" id="GO:0097602">
    <property type="term" value="F:cullin family protein binding"/>
    <property type="evidence" value="ECO:0000353"/>
    <property type="project" value="dictyBase"/>
</dbReference>
<dbReference type="GO" id="GO:1990444">
    <property type="term" value="F:F-box domain binding"/>
    <property type="evidence" value="ECO:0000353"/>
    <property type="project" value="dictyBase"/>
</dbReference>
<dbReference type="GO" id="GO:0042802">
    <property type="term" value="F:identical protein binding"/>
    <property type="evidence" value="ECO:0000314"/>
    <property type="project" value="dictyBase"/>
</dbReference>
<dbReference type="GO" id="GO:0071987">
    <property type="term" value="F:WD40-repeat domain binding"/>
    <property type="evidence" value="ECO:0000353"/>
    <property type="project" value="dictyBase"/>
</dbReference>
<dbReference type="GO" id="GO:0016567">
    <property type="term" value="P:protein ubiquitination"/>
    <property type="evidence" value="ECO:0000304"/>
    <property type="project" value="dictyBase"/>
</dbReference>
<dbReference type="GO" id="GO:0031146">
    <property type="term" value="P:SCF-dependent proteasomal ubiquitin-dependent protein catabolic process"/>
    <property type="evidence" value="ECO:0000318"/>
    <property type="project" value="GO_Central"/>
</dbReference>
<dbReference type="GO" id="GO:0030587">
    <property type="term" value="P:sorocarp development"/>
    <property type="evidence" value="ECO:0000315"/>
    <property type="project" value="dictyBase"/>
</dbReference>
<dbReference type="CDD" id="cd18322">
    <property type="entry name" value="BTB_POZ_SKP1"/>
    <property type="match status" value="1"/>
</dbReference>
<dbReference type="FunFam" id="3.30.710.10:FF:000026">
    <property type="entry name" value="E3 ubiquitin ligase complex SCF subunit"/>
    <property type="match status" value="1"/>
</dbReference>
<dbReference type="Gene3D" id="3.30.710.10">
    <property type="entry name" value="Potassium Channel Kv1.1, Chain A"/>
    <property type="match status" value="1"/>
</dbReference>
<dbReference type="InterPro" id="IPR016897">
    <property type="entry name" value="SKP1"/>
</dbReference>
<dbReference type="InterPro" id="IPR001232">
    <property type="entry name" value="SKP1-like"/>
</dbReference>
<dbReference type="InterPro" id="IPR036296">
    <property type="entry name" value="SKP1-like_dim_sf"/>
</dbReference>
<dbReference type="InterPro" id="IPR011333">
    <property type="entry name" value="SKP1/BTB/POZ_sf"/>
</dbReference>
<dbReference type="InterPro" id="IPR016072">
    <property type="entry name" value="Skp1_comp_dimer"/>
</dbReference>
<dbReference type="InterPro" id="IPR016073">
    <property type="entry name" value="Skp1_comp_POZ"/>
</dbReference>
<dbReference type="PANTHER" id="PTHR11165">
    <property type="entry name" value="SKP1"/>
    <property type="match status" value="1"/>
</dbReference>
<dbReference type="Pfam" id="PF01466">
    <property type="entry name" value="Skp1"/>
    <property type="match status" value="1"/>
</dbReference>
<dbReference type="Pfam" id="PF03931">
    <property type="entry name" value="Skp1_POZ"/>
    <property type="match status" value="1"/>
</dbReference>
<dbReference type="PIRSF" id="PIRSF028729">
    <property type="entry name" value="E3_ubiquit_lig_SCF_Skp"/>
    <property type="match status" value="1"/>
</dbReference>
<dbReference type="SMART" id="SM00512">
    <property type="entry name" value="Skp1"/>
    <property type="match status" value="1"/>
</dbReference>
<dbReference type="SUPFAM" id="SSF54695">
    <property type="entry name" value="POZ domain"/>
    <property type="match status" value="1"/>
</dbReference>
<dbReference type="SUPFAM" id="SSF81382">
    <property type="entry name" value="Skp1 dimerisation domain-like"/>
    <property type="match status" value="1"/>
</dbReference>
<organism>
    <name type="scientific">Dictyostelium discoideum</name>
    <name type="common">Social amoeba</name>
    <dbReference type="NCBI Taxonomy" id="44689"/>
    <lineage>
        <taxon>Eukaryota</taxon>
        <taxon>Amoebozoa</taxon>
        <taxon>Evosea</taxon>
        <taxon>Eumycetozoa</taxon>
        <taxon>Dictyostelia</taxon>
        <taxon>Dictyosteliales</taxon>
        <taxon>Dictyosteliaceae</taxon>
        <taxon>Dictyostelium</taxon>
    </lineage>
</organism>
<protein>
    <recommendedName>
        <fullName>SCF ubiquitin ligase complex protein SKP1b</fullName>
    </recommendedName>
    <alternativeName>
        <fullName>Glycoprotein FP21 isoform B</fullName>
    </alternativeName>
    <component>
        <recommendedName>
            <fullName>SCF ubiquitin ligase complex protein SKP1b(4-162)</fullName>
        </recommendedName>
    </component>
    <component>
        <recommendedName>
            <fullName>SCF ubiquitin ligase complex protein SKP1b(6-162)</fullName>
        </recommendedName>
    </component>
</protein>
<reference key="1">
    <citation type="journal article" date="1997" name="Gene">
        <title>The cytosolic glycoprotein FP21 of Dictyostelium discoideum is encoded by two genes resulting in a polymorphism at a single amino acid position.</title>
        <authorList>
            <person name="West C.M."/>
            <person name="Kozarov E."/>
            <person name="Teng-Umnuay P."/>
        </authorList>
    </citation>
    <scope>NUCLEOTIDE SEQUENCE [GENOMIC DNA]</scope>
    <scope>PARTIAL PROTEIN SEQUENCE</scope>
    <scope>CLEAVAGE OF INITIATOR METHIONINE</scope>
    <source>
        <strain>AX3</strain>
    </source>
</reference>
<reference key="2">
    <citation type="journal article" date="2002" name="Nature">
        <title>Sequence and analysis of chromosome 2 of Dictyostelium discoideum.</title>
        <authorList>
            <person name="Gloeckner G."/>
            <person name="Eichinger L."/>
            <person name="Szafranski K."/>
            <person name="Pachebat J.A."/>
            <person name="Bankier A.T."/>
            <person name="Dear P.H."/>
            <person name="Lehmann R."/>
            <person name="Baumgart C."/>
            <person name="Parra G."/>
            <person name="Abril J.F."/>
            <person name="Guigo R."/>
            <person name="Kumpf K."/>
            <person name="Tunggal B."/>
            <person name="Cox E.C."/>
            <person name="Quail M.A."/>
            <person name="Platzer M."/>
            <person name="Rosenthal A."/>
            <person name="Noegel A.A."/>
        </authorList>
    </citation>
    <scope>NUCLEOTIDE SEQUENCE [LARGE SCALE GENOMIC DNA]</scope>
    <source>
        <strain>AX4</strain>
    </source>
</reference>
<reference key="3">
    <citation type="journal article" date="2005" name="Nature">
        <title>The genome of the social amoeba Dictyostelium discoideum.</title>
        <authorList>
            <person name="Eichinger L."/>
            <person name="Pachebat J.A."/>
            <person name="Gloeckner G."/>
            <person name="Rajandream M.A."/>
            <person name="Sucgang R."/>
            <person name="Berriman M."/>
            <person name="Song J."/>
            <person name="Olsen R."/>
            <person name="Szafranski K."/>
            <person name="Xu Q."/>
            <person name="Tunggal B."/>
            <person name="Kummerfeld S."/>
            <person name="Madera M."/>
            <person name="Konfortov B.A."/>
            <person name="Rivero F."/>
            <person name="Bankier A.T."/>
            <person name="Lehmann R."/>
            <person name="Hamlin N."/>
            <person name="Davies R."/>
            <person name="Gaudet P."/>
            <person name="Fey P."/>
            <person name="Pilcher K."/>
            <person name="Chen G."/>
            <person name="Saunders D."/>
            <person name="Sodergren E.J."/>
            <person name="Davis P."/>
            <person name="Kerhornou A."/>
            <person name="Nie X."/>
            <person name="Hall N."/>
            <person name="Anjard C."/>
            <person name="Hemphill L."/>
            <person name="Bason N."/>
            <person name="Farbrother P."/>
            <person name="Desany B."/>
            <person name="Just E."/>
            <person name="Morio T."/>
            <person name="Rost R."/>
            <person name="Churcher C.M."/>
            <person name="Cooper J."/>
            <person name="Haydock S."/>
            <person name="van Driessche N."/>
            <person name="Cronin A."/>
            <person name="Goodhead I."/>
            <person name="Muzny D.M."/>
            <person name="Mourier T."/>
            <person name="Pain A."/>
            <person name="Lu M."/>
            <person name="Harper D."/>
            <person name="Lindsay R."/>
            <person name="Hauser H."/>
            <person name="James K.D."/>
            <person name="Quiles M."/>
            <person name="Madan Babu M."/>
            <person name="Saito T."/>
            <person name="Buchrieser C."/>
            <person name="Wardroper A."/>
            <person name="Felder M."/>
            <person name="Thangavelu M."/>
            <person name="Johnson D."/>
            <person name="Knights A."/>
            <person name="Loulseged H."/>
            <person name="Mungall K.L."/>
            <person name="Oliver K."/>
            <person name="Price C."/>
            <person name="Quail M.A."/>
            <person name="Urushihara H."/>
            <person name="Hernandez J."/>
            <person name="Rabbinowitsch E."/>
            <person name="Steffen D."/>
            <person name="Sanders M."/>
            <person name="Ma J."/>
            <person name="Kohara Y."/>
            <person name="Sharp S."/>
            <person name="Simmonds M.N."/>
            <person name="Spiegler S."/>
            <person name="Tivey A."/>
            <person name="Sugano S."/>
            <person name="White B."/>
            <person name="Walker D."/>
            <person name="Woodward J.R."/>
            <person name="Winckler T."/>
            <person name="Tanaka Y."/>
            <person name="Shaulsky G."/>
            <person name="Schleicher M."/>
            <person name="Weinstock G.M."/>
            <person name="Rosenthal A."/>
            <person name="Cox E.C."/>
            <person name="Chisholm R.L."/>
            <person name="Gibbs R.A."/>
            <person name="Loomis W.F."/>
            <person name="Platzer M."/>
            <person name="Kay R.R."/>
            <person name="Williams J.G."/>
            <person name="Dear P.H."/>
            <person name="Noegel A.A."/>
            <person name="Barrell B.G."/>
            <person name="Kuspa A."/>
        </authorList>
    </citation>
    <scope>NUCLEOTIDE SEQUENCE [LARGE SCALE GENOMIC DNA]</scope>
    <source>
        <strain>AX4</strain>
    </source>
</reference>
<reference key="4">
    <citation type="journal article" date="1992" name="J. Biol. Chem.">
        <title>Characterization of a cytosolic fucosylation pathway in Dictyostelium.</title>
        <authorList>
            <person name="Gonzalez-Yanes B."/>
            <person name="Cicero J.M."/>
            <person name="Brown R.D. Jr."/>
            <person name="West C.M."/>
        </authorList>
    </citation>
    <scope>PROTEIN SEQUENCE OF 4-38</scope>
</reference>
<reference key="5">
    <citation type="journal article" date="1998" name="J. Biol. Chem.">
        <title>The cytoplasmic F-box binding protein SKP1 contains a novel pentasaccharide linked to hydroxyproline in Dictyostelium.</title>
        <authorList>
            <person name="Teng-umnuay P."/>
            <person name="Morris H.R."/>
            <person name="Dell A."/>
            <person name="Panico M."/>
            <person name="Paxton T."/>
            <person name="West C.M."/>
        </authorList>
    </citation>
    <scope>HYDROXYLATION AT PRO-143</scope>
    <scope>GLYCOSYLATION AT PRO-143</scope>
    <scope>IDENTIFICATION BY MASS SPECTROMETRY</scope>
</reference>
<reference key="6">
    <citation type="journal article" date="2001" name="Glycobiology">
        <title>Analysis of Skp1 glycosylation and nuclear enrichment in Dictyostelium.</title>
        <authorList>
            <person name="Sassi S."/>
            <person name="Sweetinburgh M."/>
            <person name="Erogul J."/>
            <person name="Zhang P."/>
            <person name="Teng-Umnuay P."/>
            <person name="West C.M."/>
        </authorList>
    </citation>
    <scope>DEVELOPMENTAL STAGE</scope>
    <scope>GLYCOSYLATION</scope>
    <scope>MUTAGENESIS OF PRO-143</scope>
    <scope>IDENTIFICATION BY MASS SPECTROMETRY</scope>
</reference>
<reference key="7">
    <citation type="journal article" date="2002" name="Glycobiology">
        <title>Complex glycosylation of Skp1 in Dictyostelium: implications for the modification of other eukaryotic cytoplasmic and nuclear proteins.</title>
        <authorList>
            <person name="West C.M."/>
            <person name="van der Wel H."/>
            <person name="Gaucher E.A."/>
        </authorList>
    </citation>
    <scope>GLYCOSYLATION</scope>
</reference>
<reference key="8">
    <citation type="journal article" date="2002" name="J. Biol. Chem.">
        <title>A bifunctional diglycosyltransferase forms the Fucalpha1,2Galbeta1,3-disaccharide on Skp1 in the cytoplasm of dictyostelium.</title>
        <authorList>
            <person name="Van Der Wel H."/>
            <person name="Fisher S.Z."/>
            <person name="West C.M."/>
        </authorList>
    </citation>
    <scope>CLEAVAGE OF INITIATOR METHIONINE</scope>
    <scope>ACETYLATION AT SER-2</scope>
    <scope>HYDROXYLATION AT PRO-143</scope>
    <scope>GLYCOSYLATION AT PRO-143</scope>
    <scope>MASS SPECTROMETRY</scope>
</reference>
<reference key="9">
    <citation type="journal article" date="2004" name="J. Biol. Chem.">
        <title>Specificity of a soluble UDP-galactose:fucoside alpha1,3-galactosyltransferase that modifies the cytoplasmic glycoprotein Skp1 in Dictyostelium.</title>
        <authorList>
            <person name="Ketcham C."/>
            <person name="Wang F."/>
            <person name="Fisher S.Z."/>
            <person name="Ercan A."/>
            <person name="van der Wel H."/>
            <person name="Locke R.D."/>
            <person name="Sirajud-Doulah K."/>
            <person name="Matta K.L."/>
            <person name="West C.M."/>
        </authorList>
    </citation>
    <scope>GLYCOSYLATION BY AGTA</scope>
</reference>
<sequence>MSLVKLESSDEKVFEIEKEIACMSVTIKNMIEDIGESDAPIPLPNVTSTILEKVLDYCRHHHQHPSPQGDDKKDEKRLDDIPPYDRDFCKVDQPTLFELILAANYLDIKPLLDVTCKTVANMIRGKTPEEIRKIFNIKNDFTPEEEEQIRKENEWCEDKGGN</sequence>
<proteinExistence type="evidence at protein level"/>
<feature type="initiator methionine" description="Removed" evidence="3 4">
    <location>
        <position position="1"/>
    </location>
</feature>
<feature type="chain" id="PRO_0000312588" description="SCF ubiquitin ligase complex protein SKP1b">
    <location>
        <begin position="2"/>
        <end position="162"/>
    </location>
</feature>
<feature type="chain" id="PRO_0000328246" description="SCF ubiquitin ligase complex protein SKP1b(4-162)">
    <location>
        <begin position="4"/>
        <end position="162"/>
    </location>
</feature>
<feature type="chain" id="PRO_0000328247" description="SCF ubiquitin ligase complex protein SKP1b(6-162)">
    <location>
        <begin position="6"/>
        <end position="162"/>
    </location>
</feature>
<feature type="region of interest" description="Interaction with the F-box domain of F-box proteins" evidence="1">
    <location>
        <begin position="100"/>
        <end position="162"/>
    </location>
</feature>
<feature type="modified residue" description="N-acetylserine" evidence="7">
    <location>
        <position position="2"/>
    </location>
</feature>
<feature type="modified residue" description="4-hydroxyproline" evidence="3 5">
    <location>
        <position position="143"/>
    </location>
</feature>
<feature type="glycosylation site" description="O-linked (GlcNAc...) hydroxyproline" evidence="3 5">
    <location>
        <position position="143"/>
    </location>
</feature>
<feature type="mutagenesis site" description="Lack of glycosylation." evidence="2">
    <original>P</original>
    <variation>A</variation>
    <location>
        <position position="143"/>
    </location>
</feature>